<reference key="1">
    <citation type="journal article" date="2006" name="J. Biol. Chem.">
        <title>NADP-dependent mannitol dehydrogenase, a major allergen of Cladosporium herbarum.</title>
        <authorList>
            <person name="Simon-Nobbe B."/>
            <person name="Denk U."/>
            <person name="Schneider P.B."/>
            <person name="Radauer C."/>
            <person name="Teige M."/>
            <person name="Crameri R."/>
            <person name="Hawranek T."/>
            <person name="Lang R."/>
            <person name="Richter K."/>
            <person name="Schmid-Grendelmeier P."/>
            <person name="Nobbe S."/>
            <person name="Hartl A."/>
            <person name="Breitenbach M."/>
        </authorList>
    </citation>
    <scope>NUCLEOTIDE SEQUENCE [MRNA]</scope>
    <scope>PROTEIN SEQUENCE OF 2-19; 22-31; 81-86; 208-217 AND 229-238</scope>
    <scope>FUNCTION</scope>
    <scope>CATALYTIC ACTIVITY</scope>
    <scope>BIOPHYSICOCHEMICAL PROPERTIES</scope>
    <scope>SUBSTRATE SPECIFICITY</scope>
    <scope>ALLERGEN</scope>
    <scope>CIRCULAR DICHROISM ANALYSIS</scope>
    <source>
        <strain evidence="5">280202-Berlin</strain>
        <tissue evidence="5">Mycelium</tissue>
    </source>
</reference>
<reference key="2">
    <citation type="journal article" date="2010" name="Biochimie">
        <title>Crystal structure of the NADP-dependent mannitol dehydrogenase from Cladosporium herbarum: Implications for oligomerisation and catalysis.</title>
        <authorList>
            <person name="Nuess D."/>
            <person name="Goettig P."/>
            <person name="Magler I."/>
            <person name="Denk U."/>
            <person name="Breitenbach M."/>
            <person name="Schneider P.B."/>
            <person name="Brandstetter H."/>
            <person name="Simon-Nobbe B."/>
        </authorList>
    </citation>
    <scope>X-RAY CRYSTALLOGRAPHY (2.30 ANGSTROMS)</scope>
    <scope>SUBUNIT</scope>
    <scope>REACTION MECHANISM</scope>
</reference>
<keyword id="KW-0002">3D-structure</keyword>
<keyword id="KW-0020">Allergen</keyword>
<keyword id="KW-0903">Direct protein sequencing</keyword>
<keyword id="KW-0521">NADP</keyword>
<keyword id="KW-0560">Oxidoreductase</keyword>
<comment type="function">
    <text evidence="3">Interconverts D-mannitol and D-fructose. Not active with fructose 6-phosphate or NADH.</text>
</comment>
<comment type="catalytic activity">
    <reaction evidence="3">
        <text>D-mannitol + NADP(+) = D-fructose + NADPH + H(+)</text>
        <dbReference type="Rhea" id="RHEA:16765"/>
        <dbReference type="ChEBI" id="CHEBI:15378"/>
        <dbReference type="ChEBI" id="CHEBI:16899"/>
        <dbReference type="ChEBI" id="CHEBI:37721"/>
        <dbReference type="ChEBI" id="CHEBI:57783"/>
        <dbReference type="ChEBI" id="CHEBI:58349"/>
        <dbReference type="EC" id="1.1.1.138"/>
    </reaction>
    <physiologicalReaction direction="left-to-right" evidence="3">
        <dbReference type="Rhea" id="RHEA:16766"/>
    </physiologicalReaction>
    <physiologicalReaction direction="right-to-left" evidence="3">
        <dbReference type="Rhea" id="RHEA:16767"/>
    </physiologicalReaction>
</comment>
<comment type="biophysicochemical properties">
    <kinetics>
        <KM evidence="3">1.17 uM for D-fructose (at pH 7.5)</KM>
        <KM evidence="3">0.23 uM for D-mannitol (at pH 7.5)</KM>
        <KM evidence="3">53 uM for NADPH (at pH 7.5)</KM>
        <KM evidence="3">67 uM for NADP(+) (at pH 7.5)</KM>
    </kinetics>
</comment>
<comment type="subunit">
    <text evidence="4">Exists as monomer, dimer and tetramer.</text>
</comment>
<comment type="allergen">
    <text evidence="3">Causes an allergic reaction in human. Binds to IgE in 57% of 21 C.herbarum-allergic patients tested.</text>
</comment>
<comment type="similarity">
    <text evidence="7">Belongs to the short-chain dehydrogenases/reductases (SDR) family.</text>
</comment>
<sequence>MPGQQATKHESLLDQLSLKGKVVVVTGASGPKGMGIEAARGCAEMGAAVAITYASRAQGAEENVKELEKTYGIKAKAYKCQVDSYESCEKLVKDVVADFGQIDAFIANAGATADSGILDGSVEAWNHVVQVDLNGTFHCAKAVGHHFKERGTGSLVITASMSGHIANFPQEQTSYNVAKAGCIHMARSLANEWRDFARVNSISPGYIDTGLSDFVPKETQQLWHSMIPMGRDGLAKELKGAYVYFASDASTYTTGADLLIDGGYTTR</sequence>
<organism>
    <name type="scientific">Davidiella tassiana</name>
    <name type="common">Mycosphaerella tassiana</name>
    <name type="synonym">Cladosporium herbarum</name>
    <dbReference type="NCBI Taxonomy" id="29918"/>
    <lineage>
        <taxon>Eukaryota</taxon>
        <taxon>Fungi</taxon>
        <taxon>Dikarya</taxon>
        <taxon>Ascomycota</taxon>
        <taxon>Pezizomycotina</taxon>
        <taxon>Dothideomycetes</taxon>
        <taxon>Dothideomycetidae</taxon>
        <taxon>Cladosporiales</taxon>
        <taxon>Cladosporiaceae</taxon>
        <taxon>Cladosporium</taxon>
    </lineage>
</organism>
<feature type="initiator methionine" description="Removed" evidence="3">
    <location>
        <position position="1"/>
    </location>
</feature>
<feature type="chain" id="PRO_0000054728" description="NADP-dependent mannitol dehydrogenase" evidence="8">
    <location>
        <begin position="2"/>
        <end position="267"/>
    </location>
</feature>
<feature type="active site" description="Proton donor" evidence="9">
    <location>
        <position position="160"/>
    </location>
</feature>
<feature type="active site" description="Proton acceptor" evidence="9">
    <location>
        <position position="175"/>
    </location>
</feature>
<feature type="active site" description="Lowers pKa of active site Tyr" evidence="9">
    <location>
        <position position="179"/>
    </location>
</feature>
<feature type="binding site" evidence="2">
    <location>
        <position position="108"/>
    </location>
    <ligand>
        <name>NADP(+)</name>
        <dbReference type="ChEBI" id="CHEBI:58349"/>
    </ligand>
</feature>
<feature type="binding site" evidence="1">
    <location>
        <position position="141"/>
    </location>
    <ligand>
        <name>NADP(+)</name>
        <dbReference type="ChEBI" id="CHEBI:58349"/>
    </ligand>
</feature>
<feature type="binding site" evidence="2">
    <location>
        <position position="175"/>
    </location>
    <ligand>
        <name>NADP(+)</name>
        <dbReference type="ChEBI" id="CHEBI:58349"/>
    </ligand>
</feature>
<feature type="binding site" evidence="2">
    <location>
        <position position="179"/>
    </location>
    <ligand>
        <name>NADP(+)</name>
        <dbReference type="ChEBI" id="CHEBI:58349"/>
    </ligand>
</feature>
<feature type="binding site" evidence="2">
    <location>
        <position position="207"/>
    </location>
    <ligand>
        <name>NADP(+)</name>
        <dbReference type="ChEBI" id="CHEBI:58349"/>
    </ligand>
</feature>
<feature type="binding site" evidence="1">
    <location>
        <position position="209"/>
    </location>
    <ligand>
        <name>NADP(+)</name>
        <dbReference type="ChEBI" id="CHEBI:58349"/>
    </ligand>
</feature>
<feature type="helix" evidence="11">
    <location>
        <begin position="12"/>
        <end position="16"/>
    </location>
</feature>
<feature type="strand" evidence="11">
    <location>
        <begin position="22"/>
        <end position="27"/>
    </location>
</feature>
<feature type="strand" evidence="11">
    <location>
        <begin position="30"/>
        <end position="33"/>
    </location>
</feature>
<feature type="helix" evidence="11">
    <location>
        <begin position="34"/>
        <end position="44"/>
    </location>
</feature>
<feature type="strand" evidence="11">
    <location>
        <begin position="48"/>
        <end position="55"/>
    </location>
</feature>
<feature type="helix" evidence="11">
    <location>
        <begin position="57"/>
        <end position="71"/>
    </location>
</feature>
<feature type="strand" evidence="11">
    <location>
        <begin position="75"/>
        <end position="79"/>
    </location>
</feature>
<feature type="helix" evidence="11">
    <location>
        <begin position="85"/>
        <end position="99"/>
    </location>
</feature>
<feature type="strand" evidence="11">
    <location>
        <begin position="103"/>
        <end position="107"/>
    </location>
</feature>
<feature type="turn" evidence="11">
    <location>
        <begin position="117"/>
        <end position="119"/>
    </location>
</feature>
<feature type="helix" evidence="11">
    <location>
        <begin position="122"/>
        <end position="132"/>
    </location>
</feature>
<feature type="helix" evidence="11">
    <location>
        <begin position="134"/>
        <end position="150"/>
    </location>
</feature>
<feature type="strand" evidence="11">
    <location>
        <begin position="154"/>
        <end position="158"/>
    </location>
</feature>
<feature type="helix" evidence="11">
    <location>
        <begin position="161"/>
        <end position="163"/>
    </location>
</feature>
<feature type="strand" evidence="11">
    <location>
        <begin position="168"/>
        <end position="170"/>
    </location>
</feature>
<feature type="helix" evidence="11">
    <location>
        <begin position="173"/>
        <end position="192"/>
    </location>
</feature>
<feature type="turn" evidence="11">
    <location>
        <begin position="193"/>
        <end position="196"/>
    </location>
</feature>
<feature type="strand" evidence="11">
    <location>
        <begin position="198"/>
        <end position="204"/>
    </location>
</feature>
<feature type="strand" evidence="10">
    <location>
        <begin position="206"/>
        <end position="210"/>
    </location>
</feature>
<feature type="turn" evidence="11">
    <location>
        <begin position="211"/>
        <end position="214"/>
    </location>
</feature>
<feature type="helix" evidence="11">
    <location>
        <begin position="217"/>
        <end position="226"/>
    </location>
</feature>
<feature type="helix" evidence="11">
    <location>
        <begin position="235"/>
        <end position="237"/>
    </location>
</feature>
<feature type="helix" evidence="11">
    <location>
        <begin position="239"/>
        <end position="246"/>
    </location>
</feature>
<feature type="helix" evidence="11">
    <location>
        <begin position="248"/>
        <end position="250"/>
    </location>
</feature>
<feature type="strand" evidence="11">
    <location>
        <begin position="257"/>
        <end position="261"/>
    </location>
</feature>
<feature type="helix" evidence="11">
    <location>
        <begin position="264"/>
        <end position="266"/>
    </location>
</feature>
<accession>P0C0Y5</accession>
<accession>Q2TV79</accession>
<protein>
    <recommendedName>
        <fullName evidence="5 6">NADP-dependent mannitol dehydrogenase</fullName>
        <shortName evidence="5 6">MtDH</shortName>
        <ecNumber evidence="3">1.1.1.138</ecNumber>
    </recommendedName>
    <alternativeName>
        <fullName evidence="7">Mannitol 2-dehydrogenase [NADP(+)]</fullName>
    </alternativeName>
    <allergenName evidence="5">Cla h 8</allergenName>
</protein>
<proteinExistence type="evidence at protein level"/>
<name>NMTDH_DAVTA</name>
<dbReference type="EC" id="1.1.1.138" evidence="3"/>
<dbReference type="EMBL" id="AY191816">
    <property type="protein sequence ID" value="AAO91801.1"/>
    <property type="molecule type" value="mRNA"/>
</dbReference>
<dbReference type="PDB" id="3GDF">
    <property type="method" value="X-ray"/>
    <property type="resolution" value="2.50 A"/>
    <property type="chains" value="A/B/C/D=1-267"/>
</dbReference>
<dbReference type="PDB" id="3GDG">
    <property type="method" value="X-ray"/>
    <property type="resolution" value="2.30 A"/>
    <property type="chains" value="A/B/C/D=1-267"/>
</dbReference>
<dbReference type="PDB" id="7KRG">
    <property type="method" value="X-ray"/>
    <property type="resolution" value="2.04 A"/>
    <property type="chains" value="A/B/C/D/E/F/G/H=1-267"/>
</dbReference>
<dbReference type="PDBsum" id="3GDF"/>
<dbReference type="PDBsum" id="3GDG"/>
<dbReference type="PDBsum" id="7KRG"/>
<dbReference type="SMR" id="P0C0Y5"/>
<dbReference type="Allergome" id="2485">
    <property type="allergen name" value="Cla h 8"/>
</dbReference>
<dbReference type="Allergome" id="3207">
    <property type="allergen name" value="Cla h 8.0101"/>
</dbReference>
<dbReference type="BRENDA" id="1.1.1.138">
    <property type="organism ID" value="7286"/>
</dbReference>
<dbReference type="EvolutionaryTrace" id="P0C0Y5"/>
<dbReference type="GO" id="GO:0050085">
    <property type="term" value="F:mannitol 2-dehydrogenase (NADP+) activity"/>
    <property type="evidence" value="ECO:0000314"/>
    <property type="project" value="UniProtKB"/>
</dbReference>
<dbReference type="GO" id="GO:0050661">
    <property type="term" value="F:NADP binding"/>
    <property type="evidence" value="ECO:0000250"/>
    <property type="project" value="UniProtKB"/>
</dbReference>
<dbReference type="GO" id="GO:0050664">
    <property type="term" value="F:oxidoreductase activity, acting on NAD(P)H, oxygen as acceptor"/>
    <property type="evidence" value="ECO:0007669"/>
    <property type="project" value="TreeGrafter"/>
</dbReference>
<dbReference type="GO" id="GO:0042803">
    <property type="term" value="F:protein homodimerization activity"/>
    <property type="evidence" value="ECO:0000314"/>
    <property type="project" value="UniProtKB"/>
</dbReference>
<dbReference type="GO" id="GO:0019594">
    <property type="term" value="P:mannitol metabolic process"/>
    <property type="evidence" value="ECO:0000314"/>
    <property type="project" value="UniProtKB"/>
</dbReference>
<dbReference type="GO" id="GO:0051289">
    <property type="term" value="P:protein homotetramerization"/>
    <property type="evidence" value="ECO:0000314"/>
    <property type="project" value="UniProtKB"/>
</dbReference>
<dbReference type="CDD" id="cd05352">
    <property type="entry name" value="MDH-like_SDR_c"/>
    <property type="match status" value="1"/>
</dbReference>
<dbReference type="FunFam" id="3.40.50.720:FF:000090">
    <property type="entry name" value="NADP-dependent mannitol dehydrogenase"/>
    <property type="match status" value="1"/>
</dbReference>
<dbReference type="Gene3D" id="3.40.50.720">
    <property type="entry name" value="NAD(P)-binding Rossmann-like Domain"/>
    <property type="match status" value="1"/>
</dbReference>
<dbReference type="InterPro" id="IPR036291">
    <property type="entry name" value="NAD(P)-bd_dom_sf"/>
</dbReference>
<dbReference type="InterPro" id="IPR002347">
    <property type="entry name" value="SDR_fam"/>
</dbReference>
<dbReference type="PANTHER" id="PTHR43008">
    <property type="entry name" value="BENZIL REDUCTASE"/>
    <property type="match status" value="1"/>
</dbReference>
<dbReference type="PANTHER" id="PTHR43008:SF3">
    <property type="entry name" value="MANNITOL DEHYDROGENASE"/>
    <property type="match status" value="1"/>
</dbReference>
<dbReference type="Pfam" id="PF13561">
    <property type="entry name" value="adh_short_C2"/>
    <property type="match status" value="1"/>
</dbReference>
<dbReference type="PRINTS" id="PR00081">
    <property type="entry name" value="GDHRDH"/>
</dbReference>
<dbReference type="SUPFAM" id="SSF51735">
    <property type="entry name" value="NAD(P)-binding Rossmann-fold domains"/>
    <property type="match status" value="1"/>
</dbReference>
<evidence type="ECO:0000250" key="1">
    <source>
        <dbReference type="UniProtKB" id="L0E2Z4"/>
    </source>
</evidence>
<evidence type="ECO:0000250" key="2">
    <source>
        <dbReference type="UniProtKB" id="O93868"/>
    </source>
</evidence>
<evidence type="ECO:0000269" key="3">
    <source>
    </source>
</evidence>
<evidence type="ECO:0000269" key="4">
    <source>
    </source>
</evidence>
<evidence type="ECO:0000303" key="5">
    <source>
    </source>
</evidence>
<evidence type="ECO:0000303" key="6">
    <source>
    </source>
</evidence>
<evidence type="ECO:0000305" key="7"/>
<evidence type="ECO:0000305" key="8">
    <source>
    </source>
</evidence>
<evidence type="ECO:0000305" key="9">
    <source>
    </source>
</evidence>
<evidence type="ECO:0007829" key="10">
    <source>
        <dbReference type="PDB" id="3GDF"/>
    </source>
</evidence>
<evidence type="ECO:0007829" key="11">
    <source>
        <dbReference type="PDB" id="7KRG"/>
    </source>
</evidence>